<name>ADEC1_RHIME</name>
<dbReference type="EC" id="3.5.4.2" evidence="1"/>
<dbReference type="EMBL" id="AL591688">
    <property type="protein sequence ID" value="CAC46984.1"/>
    <property type="molecule type" value="Genomic_DNA"/>
</dbReference>
<dbReference type="RefSeq" id="NP_386511.1">
    <property type="nucleotide sequence ID" value="NC_003047.1"/>
</dbReference>
<dbReference type="SMR" id="Q92N33"/>
<dbReference type="EnsemblBacteria" id="CAC46984">
    <property type="protein sequence ID" value="CAC46984"/>
    <property type="gene ID" value="SMc01533"/>
</dbReference>
<dbReference type="KEGG" id="sme:SMc01533"/>
<dbReference type="PATRIC" id="fig|266834.11.peg.3891"/>
<dbReference type="eggNOG" id="COG1001">
    <property type="taxonomic scope" value="Bacteria"/>
</dbReference>
<dbReference type="HOGENOM" id="CLU_027935_0_0_5"/>
<dbReference type="OrthoDB" id="9775607at2"/>
<dbReference type="Proteomes" id="UP000001976">
    <property type="component" value="Chromosome"/>
</dbReference>
<dbReference type="GO" id="GO:0000034">
    <property type="term" value="F:adenine deaminase activity"/>
    <property type="evidence" value="ECO:0007669"/>
    <property type="project" value="UniProtKB-UniRule"/>
</dbReference>
<dbReference type="GO" id="GO:0006146">
    <property type="term" value="P:adenine catabolic process"/>
    <property type="evidence" value="ECO:0007669"/>
    <property type="project" value="InterPro"/>
</dbReference>
<dbReference type="CDD" id="cd01295">
    <property type="entry name" value="AdeC"/>
    <property type="match status" value="1"/>
</dbReference>
<dbReference type="Gene3D" id="3.20.20.140">
    <property type="entry name" value="Metal-dependent hydrolases"/>
    <property type="match status" value="1"/>
</dbReference>
<dbReference type="Gene3D" id="2.30.40.10">
    <property type="entry name" value="Urease, subunit C, domain 1"/>
    <property type="match status" value="1"/>
</dbReference>
<dbReference type="HAMAP" id="MF_01518">
    <property type="entry name" value="Adenine_deamin"/>
    <property type="match status" value="1"/>
</dbReference>
<dbReference type="InterPro" id="IPR006679">
    <property type="entry name" value="Adenine_deam"/>
</dbReference>
<dbReference type="InterPro" id="IPR026912">
    <property type="entry name" value="Adenine_deam_C"/>
</dbReference>
<dbReference type="InterPro" id="IPR006680">
    <property type="entry name" value="Amidohydro-rel"/>
</dbReference>
<dbReference type="InterPro" id="IPR011059">
    <property type="entry name" value="Metal-dep_hydrolase_composite"/>
</dbReference>
<dbReference type="InterPro" id="IPR032466">
    <property type="entry name" value="Metal_Hydrolase"/>
</dbReference>
<dbReference type="NCBIfam" id="TIGR01178">
    <property type="entry name" value="ade"/>
    <property type="match status" value="1"/>
</dbReference>
<dbReference type="PANTHER" id="PTHR11113:SF2">
    <property type="entry name" value="ADENINE DEAMINASE"/>
    <property type="match status" value="1"/>
</dbReference>
<dbReference type="PANTHER" id="PTHR11113">
    <property type="entry name" value="N-ACETYLGLUCOSAMINE-6-PHOSPHATE DEACETYLASE"/>
    <property type="match status" value="1"/>
</dbReference>
<dbReference type="Pfam" id="PF13382">
    <property type="entry name" value="Adenine_deam_C"/>
    <property type="match status" value="1"/>
</dbReference>
<dbReference type="Pfam" id="PF01979">
    <property type="entry name" value="Amidohydro_1"/>
    <property type="match status" value="1"/>
</dbReference>
<dbReference type="SUPFAM" id="SSF51338">
    <property type="entry name" value="Composite domain of metallo-dependent hydrolases"/>
    <property type="match status" value="1"/>
</dbReference>
<dbReference type="SUPFAM" id="SSF51556">
    <property type="entry name" value="Metallo-dependent hydrolases"/>
    <property type="match status" value="1"/>
</dbReference>
<comment type="catalytic activity">
    <reaction evidence="1">
        <text>adenine + H2O + H(+) = hypoxanthine + NH4(+)</text>
        <dbReference type="Rhea" id="RHEA:23688"/>
        <dbReference type="ChEBI" id="CHEBI:15377"/>
        <dbReference type="ChEBI" id="CHEBI:15378"/>
        <dbReference type="ChEBI" id="CHEBI:16708"/>
        <dbReference type="ChEBI" id="CHEBI:17368"/>
        <dbReference type="ChEBI" id="CHEBI:28938"/>
        <dbReference type="EC" id="3.5.4.2"/>
    </reaction>
</comment>
<comment type="cofactor">
    <cofactor evidence="1">
        <name>Mn(2+)</name>
        <dbReference type="ChEBI" id="CHEBI:29035"/>
    </cofactor>
</comment>
<comment type="similarity">
    <text evidence="1">Belongs to the metallo-dependent hydrolases superfamily. Adenine deaminase family.</text>
</comment>
<proteinExistence type="inferred from homology"/>
<evidence type="ECO:0000255" key="1">
    <source>
        <dbReference type="HAMAP-Rule" id="MF_01518"/>
    </source>
</evidence>
<organism>
    <name type="scientific">Rhizobium meliloti (strain 1021)</name>
    <name type="common">Ensifer meliloti</name>
    <name type="synonym">Sinorhizobium meliloti</name>
    <dbReference type="NCBI Taxonomy" id="266834"/>
    <lineage>
        <taxon>Bacteria</taxon>
        <taxon>Pseudomonadati</taxon>
        <taxon>Pseudomonadota</taxon>
        <taxon>Alphaproteobacteria</taxon>
        <taxon>Hyphomicrobiales</taxon>
        <taxon>Rhizobiaceae</taxon>
        <taxon>Sinorhizobium/Ensifer group</taxon>
        <taxon>Sinorhizobium</taxon>
    </lineage>
</organism>
<keyword id="KW-0378">Hydrolase</keyword>
<keyword id="KW-0464">Manganese</keyword>
<keyword id="KW-1185">Reference proteome</keyword>
<reference key="1">
    <citation type="journal article" date="2001" name="Proc. Natl. Acad. Sci. U.S.A.">
        <title>Analysis of the chromosome sequence of the legume symbiont Sinorhizobium meliloti strain 1021.</title>
        <authorList>
            <person name="Capela D."/>
            <person name="Barloy-Hubler F."/>
            <person name="Gouzy J."/>
            <person name="Bothe G."/>
            <person name="Ampe F."/>
            <person name="Batut J."/>
            <person name="Boistard P."/>
            <person name="Becker A."/>
            <person name="Boutry M."/>
            <person name="Cadieu E."/>
            <person name="Dreano S."/>
            <person name="Gloux S."/>
            <person name="Godrie T."/>
            <person name="Goffeau A."/>
            <person name="Kahn D."/>
            <person name="Kiss E."/>
            <person name="Lelaure V."/>
            <person name="Masuy D."/>
            <person name="Pohl T."/>
            <person name="Portetelle D."/>
            <person name="Puehler A."/>
            <person name="Purnelle B."/>
            <person name="Ramsperger U."/>
            <person name="Renard C."/>
            <person name="Thebault P."/>
            <person name="Vandenbol M."/>
            <person name="Weidner S."/>
            <person name="Galibert F."/>
        </authorList>
    </citation>
    <scope>NUCLEOTIDE SEQUENCE [LARGE SCALE GENOMIC DNA]</scope>
    <source>
        <strain>1021</strain>
    </source>
</reference>
<reference key="2">
    <citation type="journal article" date="2001" name="Science">
        <title>The composite genome of the legume symbiont Sinorhizobium meliloti.</title>
        <authorList>
            <person name="Galibert F."/>
            <person name="Finan T.M."/>
            <person name="Long S.R."/>
            <person name="Puehler A."/>
            <person name="Abola P."/>
            <person name="Ampe F."/>
            <person name="Barloy-Hubler F."/>
            <person name="Barnett M.J."/>
            <person name="Becker A."/>
            <person name="Boistard P."/>
            <person name="Bothe G."/>
            <person name="Boutry M."/>
            <person name="Bowser L."/>
            <person name="Buhrmester J."/>
            <person name="Cadieu E."/>
            <person name="Capela D."/>
            <person name="Chain P."/>
            <person name="Cowie A."/>
            <person name="Davis R.W."/>
            <person name="Dreano S."/>
            <person name="Federspiel N.A."/>
            <person name="Fisher R.F."/>
            <person name="Gloux S."/>
            <person name="Godrie T."/>
            <person name="Goffeau A."/>
            <person name="Golding B."/>
            <person name="Gouzy J."/>
            <person name="Gurjal M."/>
            <person name="Hernandez-Lucas I."/>
            <person name="Hong A."/>
            <person name="Huizar L."/>
            <person name="Hyman R.W."/>
            <person name="Jones T."/>
            <person name="Kahn D."/>
            <person name="Kahn M.L."/>
            <person name="Kalman S."/>
            <person name="Keating D.H."/>
            <person name="Kiss E."/>
            <person name="Komp C."/>
            <person name="Lelaure V."/>
            <person name="Masuy D."/>
            <person name="Palm C."/>
            <person name="Peck M.C."/>
            <person name="Pohl T.M."/>
            <person name="Portetelle D."/>
            <person name="Purnelle B."/>
            <person name="Ramsperger U."/>
            <person name="Surzycki R."/>
            <person name="Thebault P."/>
            <person name="Vandenbol M."/>
            <person name="Vorhoelter F.J."/>
            <person name="Weidner S."/>
            <person name="Wells D.H."/>
            <person name="Wong K."/>
            <person name="Yeh K.-C."/>
            <person name="Batut J."/>
        </authorList>
    </citation>
    <scope>NUCLEOTIDE SEQUENCE [LARGE SCALE GENOMIC DNA]</scope>
    <source>
        <strain>1021</strain>
    </source>
</reference>
<sequence length="565" mass="61055">MSEALERLIDQGVGREPADIVLKGGRFFDLVTGELVASDIAISGERIVGTCGDYEGREEIDVTGRIVVPGFIDTHLHIESSLVTPHEFDRCVLPLGITTVVCDPHEIANVLGTEGIQYFLDSAMETVMDIRVQLSSCVPATHLETSGADLPVGRLTPFRHHPKVIGLAEFMNFPGVVNKDPVCLAKLDAFQDGHIDGHAPLLRGKELNGYLAAGIRTDHECTSAEEALEKIRKGMHILVREGSVSKDLQALMPILTERLSPYLALCTDDRNPLDIAEQGHLDNMIRTAISAGVEPLAIYRAASISAARAFGLRDRGLVAPGWRADLVIVDSLENCKAELVLSAGRRVTDALFAGRKPVEPVGLDSVKAREVKAADFGLPYNEGETSVLGVLPGKIITEHRRYRLPAEGNRTGVDLDRDIIKVAVIERHGVNGNHANGFVQGFGLKKGAIASTVGHDSHNICVVGVNDDDMALAVNRLGEIKGGFVVVHDGKVTGEIALPVAGLMSLEPYERVRDTLHHLRQAAFALGATLEEPFLQLAFLPLPVIPHLKISDRGLVDVDRFMLIG</sequence>
<accession>Q92N33</accession>
<feature type="chain" id="PRO_0000142432" description="Adenine deaminase 1">
    <location>
        <begin position="1"/>
        <end position="565"/>
    </location>
</feature>
<protein>
    <recommendedName>
        <fullName evidence="1">Adenine deaminase 1</fullName>
        <shortName evidence="1">Adenase 1</shortName>
        <shortName evidence="1">Adenine aminase 1</shortName>
        <ecNumber evidence="1">3.5.4.2</ecNumber>
    </recommendedName>
</protein>
<gene>
    <name evidence="1" type="primary">ade1</name>
    <name type="synonym">adeC1</name>
    <name type="ordered locus">R02405</name>
    <name type="ORF">SMc01533</name>
</gene>